<gene>
    <name type="primary">ALDOC</name>
    <name type="synonym">ALDC</name>
</gene>
<name>ALDOC_PANTR</name>
<feature type="chain" id="PRO_0000216950" description="Fructose-bisphosphate aldolase C">
    <location>
        <begin position="1"/>
        <end position="364"/>
    </location>
</feature>
<feature type="active site" description="Proton acceptor" evidence="1">
    <location>
        <position position="188"/>
    </location>
</feature>
<feature type="active site" description="Schiff-base intermediate with dihydroxyacetone-P">
    <location>
        <position position="230"/>
    </location>
</feature>
<feature type="binding site">
    <location>
        <position position="56"/>
    </location>
    <ligand>
        <name>substrate</name>
    </ligand>
</feature>
<feature type="binding site">
    <location>
        <position position="147"/>
    </location>
    <ligand>
        <name>substrate</name>
    </ligand>
</feature>
<feature type="site" description="Necessary for preference for fructose 1,6-bisphosphate over fructose 1-phosphate">
    <location>
        <position position="364"/>
    </location>
</feature>
<feature type="modified residue" description="Phosphotyrosine" evidence="2">
    <location>
        <position position="5"/>
    </location>
</feature>
<feature type="modified residue" description="Phosphoserine" evidence="3">
    <location>
        <position position="36"/>
    </location>
</feature>
<feature type="modified residue" description="Phosphoserine" evidence="3">
    <location>
        <position position="39"/>
    </location>
</feature>
<feature type="modified residue" description="Phosphoserine" evidence="3">
    <location>
        <position position="45"/>
    </location>
</feature>
<feature type="modified residue" description="N6-acetyllysine" evidence="3">
    <location>
        <position position="111"/>
    </location>
</feature>
<feature type="modified residue" description="Phosphoserine" evidence="2">
    <location>
        <position position="132"/>
    </location>
</feature>
<dbReference type="EC" id="4.1.2.13"/>
<dbReference type="EMBL" id="AB188273">
    <property type="protein sequence ID" value="BAD74024.1"/>
    <property type="molecule type" value="mRNA"/>
</dbReference>
<dbReference type="RefSeq" id="NP_001009147.1">
    <property type="nucleotide sequence ID" value="NM_001009147.2"/>
</dbReference>
<dbReference type="SMR" id="Q5R1X4"/>
<dbReference type="STRING" id="9598.ENSPTRP00000015230"/>
<dbReference type="PaxDb" id="9598-ENSPTRP00000015230"/>
<dbReference type="GeneID" id="493951"/>
<dbReference type="CTD" id="230"/>
<dbReference type="eggNOG" id="KOG1557">
    <property type="taxonomic scope" value="Eukaryota"/>
</dbReference>
<dbReference type="InParanoid" id="Q5R1X4"/>
<dbReference type="UniPathway" id="UPA00109">
    <property type="reaction ID" value="UER00183"/>
</dbReference>
<dbReference type="Proteomes" id="UP000002277">
    <property type="component" value="Unplaced"/>
</dbReference>
<dbReference type="GO" id="GO:0005829">
    <property type="term" value="C:cytosol"/>
    <property type="evidence" value="ECO:0000318"/>
    <property type="project" value="GO_Central"/>
</dbReference>
<dbReference type="GO" id="GO:0004332">
    <property type="term" value="F:fructose-bisphosphate aldolase activity"/>
    <property type="evidence" value="ECO:0000250"/>
    <property type="project" value="UniProtKB"/>
</dbReference>
<dbReference type="GO" id="GO:0030388">
    <property type="term" value="P:fructose 1,6-bisphosphate metabolic process"/>
    <property type="evidence" value="ECO:0000250"/>
    <property type="project" value="UniProtKB"/>
</dbReference>
<dbReference type="GO" id="GO:0006096">
    <property type="term" value="P:glycolytic process"/>
    <property type="evidence" value="ECO:0000318"/>
    <property type="project" value="GO_Central"/>
</dbReference>
<dbReference type="CDD" id="cd00948">
    <property type="entry name" value="FBP_aldolase_I_a"/>
    <property type="match status" value="1"/>
</dbReference>
<dbReference type="FunFam" id="3.20.20.70:FF:000205">
    <property type="entry name" value="Fructose-bisphosphate aldolase"/>
    <property type="match status" value="1"/>
</dbReference>
<dbReference type="FunFam" id="3.20.20.70:FF:000208">
    <property type="entry name" value="Fructose-bisphosphate aldolase"/>
    <property type="match status" value="1"/>
</dbReference>
<dbReference type="Gene3D" id="3.20.20.70">
    <property type="entry name" value="Aldolase class I"/>
    <property type="match status" value="1"/>
</dbReference>
<dbReference type="InterPro" id="IPR029768">
    <property type="entry name" value="Aldolase_I_AS"/>
</dbReference>
<dbReference type="InterPro" id="IPR013785">
    <property type="entry name" value="Aldolase_TIM"/>
</dbReference>
<dbReference type="InterPro" id="IPR000741">
    <property type="entry name" value="FBA_I"/>
</dbReference>
<dbReference type="NCBIfam" id="NF033379">
    <property type="entry name" value="FrucBisAld_I"/>
    <property type="match status" value="1"/>
</dbReference>
<dbReference type="PANTHER" id="PTHR11627">
    <property type="entry name" value="FRUCTOSE-BISPHOSPHATE ALDOLASE"/>
    <property type="match status" value="1"/>
</dbReference>
<dbReference type="Pfam" id="PF00274">
    <property type="entry name" value="Glycolytic"/>
    <property type="match status" value="1"/>
</dbReference>
<dbReference type="SUPFAM" id="SSF51569">
    <property type="entry name" value="Aldolase"/>
    <property type="match status" value="1"/>
</dbReference>
<dbReference type="PROSITE" id="PS00158">
    <property type="entry name" value="ALDOLASE_CLASS_I"/>
    <property type="match status" value="1"/>
</dbReference>
<reference key="1">
    <citation type="submission" date="2004-08" db="EMBL/GenBank/DDBJ databases">
        <authorList>
            <person name="Hirai M."/>
            <person name="Sakate R."/>
            <person name="Hida M."/>
            <person name="Sugano S."/>
            <person name="Hayasaka I."/>
            <person name="Suto Y."/>
            <person name="Osada N."/>
            <person name="Hashimoto K."/>
        </authorList>
    </citation>
    <scope>NUCLEOTIDE SEQUENCE [MRNA]</scope>
    <source>
        <tissue>Cerebellum</tissue>
    </source>
</reference>
<keyword id="KW-0007">Acetylation</keyword>
<keyword id="KW-0324">Glycolysis</keyword>
<keyword id="KW-0456">Lyase</keyword>
<keyword id="KW-0597">Phosphoprotein</keyword>
<keyword id="KW-1185">Reference proteome</keyword>
<keyword id="KW-0704">Schiff base</keyword>
<accession>Q5R1X4</accession>
<organism>
    <name type="scientific">Pan troglodytes</name>
    <name type="common">Chimpanzee</name>
    <dbReference type="NCBI Taxonomy" id="9598"/>
    <lineage>
        <taxon>Eukaryota</taxon>
        <taxon>Metazoa</taxon>
        <taxon>Chordata</taxon>
        <taxon>Craniata</taxon>
        <taxon>Vertebrata</taxon>
        <taxon>Euteleostomi</taxon>
        <taxon>Mammalia</taxon>
        <taxon>Eutheria</taxon>
        <taxon>Euarchontoglires</taxon>
        <taxon>Primates</taxon>
        <taxon>Haplorrhini</taxon>
        <taxon>Catarrhini</taxon>
        <taxon>Hominidae</taxon>
        <taxon>Pan</taxon>
    </lineage>
</organism>
<evidence type="ECO:0000250" key="1"/>
<evidence type="ECO:0000250" key="2">
    <source>
        <dbReference type="UniProtKB" id="P05065"/>
    </source>
</evidence>
<evidence type="ECO:0000250" key="3">
    <source>
        <dbReference type="UniProtKB" id="P09972"/>
    </source>
</evidence>
<evidence type="ECO:0000305" key="4"/>
<proteinExistence type="evidence at transcript level"/>
<protein>
    <recommendedName>
        <fullName>Fructose-bisphosphate aldolase C</fullName>
        <ecNumber>4.1.2.13</ecNumber>
    </recommendedName>
    <alternativeName>
        <fullName>Brain-type aldolase</fullName>
    </alternativeName>
</protein>
<sequence>MPHSYPALSAEQKKELSDIALRIVAPGKGILAADESVGSMAKRLSQIGVENTEENRRLYRQVLFSADDRVKKCIGGVIFFHETLYQKDDNGVPFIRTILDKGIVVGIKVDKGVVPLAGTDGETTTQGLDGLSERCAQYKKDGADFAKWRCVLKISERTPSALAILENANVLARYASICQQNGIVPIVEPEILPDGDHDLKRCQYVTEKVLAAVYKALSDHHVYLEGTLLKPNMVTPGHACPIKYTPEEIAMATVTALRRTVPPAVPGVTFLSGGQSEEEASFNLNAINRCPLPRPWALTFSYGRALQASALNAWRGQRDNAEAATEEFIKRAEVNGLAAQGKYEGSGEDGGAAAQSLYIANHAY</sequence>
<comment type="catalytic activity">
    <reaction>
        <text>beta-D-fructose 1,6-bisphosphate = D-glyceraldehyde 3-phosphate + dihydroxyacetone phosphate</text>
        <dbReference type="Rhea" id="RHEA:14729"/>
        <dbReference type="ChEBI" id="CHEBI:32966"/>
        <dbReference type="ChEBI" id="CHEBI:57642"/>
        <dbReference type="ChEBI" id="CHEBI:59776"/>
        <dbReference type="EC" id="4.1.2.13"/>
    </reaction>
</comment>
<comment type="pathway">
    <text>Carbohydrate degradation; glycolysis; D-glyceraldehyde 3-phosphate and glycerone phosphate from D-glucose: step 4/4.</text>
</comment>
<comment type="subunit">
    <text evidence="1">Homotetramer. Interacts with ATP6V1E1.</text>
</comment>
<comment type="miscellaneous">
    <text>In vertebrates, three forms of this ubiquitous glycolytic enzyme are found, aldolase A in muscle, aldolase B in liver and aldolase C in brain.</text>
</comment>
<comment type="similarity">
    <text evidence="4">Belongs to the class I fructose-bisphosphate aldolase family.</text>
</comment>